<feature type="chain" id="PRO_1000054878" description="Small ribosomal subunit protein uS15">
    <location>
        <begin position="1"/>
        <end position="89"/>
    </location>
</feature>
<comment type="function">
    <text evidence="1">One of the primary rRNA binding proteins, it binds directly to 16S rRNA where it helps nucleate assembly of the platform of the 30S subunit by binding and bridging several RNA helices of the 16S rRNA.</text>
</comment>
<comment type="function">
    <text evidence="1">Forms an intersubunit bridge (bridge B4) with the 23S rRNA of the 50S subunit in the ribosome.</text>
</comment>
<comment type="subunit">
    <text evidence="1">Part of the 30S ribosomal subunit. Forms a bridge to the 50S subunit in the 70S ribosome, contacting the 23S rRNA.</text>
</comment>
<comment type="similarity">
    <text evidence="1">Belongs to the universal ribosomal protein uS15 family.</text>
</comment>
<keyword id="KW-1185">Reference proteome</keyword>
<keyword id="KW-0687">Ribonucleoprotein</keyword>
<keyword id="KW-0689">Ribosomal protein</keyword>
<keyword id="KW-0694">RNA-binding</keyword>
<keyword id="KW-0699">rRNA-binding</keyword>
<protein>
    <recommendedName>
        <fullName evidence="1">Small ribosomal subunit protein uS15</fullName>
    </recommendedName>
    <alternativeName>
        <fullName evidence="2">30S ribosomal protein S15</fullName>
    </alternativeName>
</protein>
<evidence type="ECO:0000255" key="1">
    <source>
        <dbReference type="HAMAP-Rule" id="MF_01343"/>
    </source>
</evidence>
<evidence type="ECO:0000305" key="2"/>
<reference key="1">
    <citation type="journal article" date="2010" name="J. Bacteriol.">
        <title>Genome sequence of the dioxin-mineralizing bacterium Sphingomonas wittichii RW1.</title>
        <authorList>
            <person name="Miller T.R."/>
            <person name="Delcher A.L."/>
            <person name="Salzberg S.L."/>
            <person name="Saunders E."/>
            <person name="Detter J.C."/>
            <person name="Halden R.U."/>
        </authorList>
    </citation>
    <scope>NUCLEOTIDE SEQUENCE [LARGE SCALE GENOMIC DNA]</scope>
    <source>
        <strain>DSM 6014 / CCUG 31198 / JCM 15750 / NBRC 105917 / EY 4224 / RW1</strain>
    </source>
</reference>
<proteinExistence type="inferred from homology"/>
<name>RS15_RHIWR</name>
<sequence>MTVTAERKTAIIADNARANGDTGSPEVQVAILTERINNLTEHFKSHAKDNHSRRGLLMLVNKRRRLLDYLKRKDAERYTALIGKLGLRK</sequence>
<dbReference type="EMBL" id="CP000699">
    <property type="protein sequence ID" value="ABQ70154.1"/>
    <property type="molecule type" value="Genomic_DNA"/>
</dbReference>
<dbReference type="SMR" id="A5VCY8"/>
<dbReference type="STRING" id="392499.Swit_3809"/>
<dbReference type="PaxDb" id="392499-Swit_3809"/>
<dbReference type="KEGG" id="swi:Swit_3809"/>
<dbReference type="eggNOG" id="COG0184">
    <property type="taxonomic scope" value="Bacteria"/>
</dbReference>
<dbReference type="HOGENOM" id="CLU_148518_0_0_5"/>
<dbReference type="OrthoDB" id="9799262at2"/>
<dbReference type="Proteomes" id="UP000001989">
    <property type="component" value="Chromosome"/>
</dbReference>
<dbReference type="GO" id="GO:0022627">
    <property type="term" value="C:cytosolic small ribosomal subunit"/>
    <property type="evidence" value="ECO:0007669"/>
    <property type="project" value="TreeGrafter"/>
</dbReference>
<dbReference type="GO" id="GO:0019843">
    <property type="term" value="F:rRNA binding"/>
    <property type="evidence" value="ECO:0007669"/>
    <property type="project" value="UniProtKB-UniRule"/>
</dbReference>
<dbReference type="GO" id="GO:0003735">
    <property type="term" value="F:structural constituent of ribosome"/>
    <property type="evidence" value="ECO:0007669"/>
    <property type="project" value="InterPro"/>
</dbReference>
<dbReference type="GO" id="GO:0006412">
    <property type="term" value="P:translation"/>
    <property type="evidence" value="ECO:0007669"/>
    <property type="project" value="UniProtKB-UniRule"/>
</dbReference>
<dbReference type="CDD" id="cd00353">
    <property type="entry name" value="Ribosomal_S15p_S13e"/>
    <property type="match status" value="1"/>
</dbReference>
<dbReference type="FunFam" id="1.10.287.10:FF:000002">
    <property type="entry name" value="30S ribosomal protein S15"/>
    <property type="match status" value="1"/>
</dbReference>
<dbReference type="Gene3D" id="6.10.250.3130">
    <property type="match status" value="1"/>
</dbReference>
<dbReference type="Gene3D" id="1.10.287.10">
    <property type="entry name" value="S15/NS1, RNA-binding"/>
    <property type="match status" value="1"/>
</dbReference>
<dbReference type="HAMAP" id="MF_01343_B">
    <property type="entry name" value="Ribosomal_uS15_B"/>
    <property type="match status" value="1"/>
</dbReference>
<dbReference type="InterPro" id="IPR000589">
    <property type="entry name" value="Ribosomal_uS15"/>
</dbReference>
<dbReference type="InterPro" id="IPR005290">
    <property type="entry name" value="Ribosomal_uS15_bac-type"/>
</dbReference>
<dbReference type="InterPro" id="IPR009068">
    <property type="entry name" value="uS15_NS1_RNA-bd_sf"/>
</dbReference>
<dbReference type="NCBIfam" id="TIGR00952">
    <property type="entry name" value="S15_bact"/>
    <property type="match status" value="1"/>
</dbReference>
<dbReference type="PANTHER" id="PTHR23321">
    <property type="entry name" value="RIBOSOMAL PROTEIN S15, BACTERIAL AND ORGANELLAR"/>
    <property type="match status" value="1"/>
</dbReference>
<dbReference type="PANTHER" id="PTHR23321:SF26">
    <property type="entry name" value="SMALL RIBOSOMAL SUBUNIT PROTEIN US15M"/>
    <property type="match status" value="1"/>
</dbReference>
<dbReference type="Pfam" id="PF00312">
    <property type="entry name" value="Ribosomal_S15"/>
    <property type="match status" value="1"/>
</dbReference>
<dbReference type="SMART" id="SM01387">
    <property type="entry name" value="Ribosomal_S15"/>
    <property type="match status" value="1"/>
</dbReference>
<dbReference type="SUPFAM" id="SSF47060">
    <property type="entry name" value="S15/NS1 RNA-binding domain"/>
    <property type="match status" value="1"/>
</dbReference>
<dbReference type="PROSITE" id="PS00362">
    <property type="entry name" value="RIBOSOMAL_S15"/>
    <property type="match status" value="1"/>
</dbReference>
<gene>
    <name evidence="1" type="primary">rpsO</name>
    <name type="ordered locus">Swit_3809</name>
</gene>
<accession>A5VCY8</accession>
<organism>
    <name type="scientific">Rhizorhabdus wittichii (strain DSM 6014 / CCUG 31198 / JCM 15750 / NBRC 105917 / EY 4224 / RW1)</name>
    <name type="common">Sphingomonas wittichii</name>
    <dbReference type="NCBI Taxonomy" id="392499"/>
    <lineage>
        <taxon>Bacteria</taxon>
        <taxon>Pseudomonadati</taxon>
        <taxon>Pseudomonadota</taxon>
        <taxon>Alphaproteobacteria</taxon>
        <taxon>Sphingomonadales</taxon>
        <taxon>Sphingomonadaceae</taxon>
        <taxon>Rhizorhabdus</taxon>
    </lineage>
</organism>